<sequence length="306" mass="34833">MSVVDQKQQYNLNKLQKRLRRDVGQAIADFNMIEEGDRIMVCLSGGKDSYTLLSILQNLQKSAPVNFSLVAVNLDQKQPGFPEHILPAYLGELGVEYKIVEENTYGIVKEKIPEGKTTCSLCSRLRRGILYRTATELGATKIALGHHRDDILQTLFLNMFYGGKLKGMPPKLMSDDGKHIVIRPLAYCREKDIERYATAKAFPIIPCNLCGSQPNLQRQVIKDMLREWDKRYPGRIETMFRAVQNVVPSHLSDFNLFDFKSITHGSEVIDGGDLAFDREELPMQPVVDIEDQPNYQSERLDIIEVK</sequence>
<comment type="function">
    <text evidence="1">Catalyzes the ATP-dependent 2-thiolation of cytidine in position 32 of tRNA, to form 2-thiocytidine (s(2)C32). The sulfur atoms are provided by the cysteine/cysteine desulfurase (IscS) system.</text>
</comment>
<comment type="catalytic activity">
    <reaction evidence="1">
        <text>cytidine(32) in tRNA + S-sulfanyl-L-cysteinyl-[cysteine desulfurase] + AH2 + ATP = 2-thiocytidine(32) in tRNA + L-cysteinyl-[cysteine desulfurase] + A + AMP + diphosphate + H(+)</text>
        <dbReference type="Rhea" id="RHEA:57048"/>
        <dbReference type="Rhea" id="RHEA-COMP:10288"/>
        <dbReference type="Rhea" id="RHEA-COMP:12157"/>
        <dbReference type="Rhea" id="RHEA-COMP:12158"/>
        <dbReference type="Rhea" id="RHEA-COMP:14821"/>
        <dbReference type="ChEBI" id="CHEBI:13193"/>
        <dbReference type="ChEBI" id="CHEBI:15378"/>
        <dbReference type="ChEBI" id="CHEBI:17499"/>
        <dbReference type="ChEBI" id="CHEBI:29950"/>
        <dbReference type="ChEBI" id="CHEBI:30616"/>
        <dbReference type="ChEBI" id="CHEBI:33019"/>
        <dbReference type="ChEBI" id="CHEBI:61963"/>
        <dbReference type="ChEBI" id="CHEBI:82748"/>
        <dbReference type="ChEBI" id="CHEBI:141453"/>
        <dbReference type="ChEBI" id="CHEBI:456215"/>
    </reaction>
    <physiologicalReaction direction="left-to-right" evidence="1">
        <dbReference type="Rhea" id="RHEA:57049"/>
    </physiologicalReaction>
</comment>
<comment type="cofactor">
    <cofactor evidence="1">
        <name>Mg(2+)</name>
        <dbReference type="ChEBI" id="CHEBI:18420"/>
    </cofactor>
</comment>
<comment type="cofactor">
    <cofactor evidence="1">
        <name>[4Fe-4S] cluster</name>
        <dbReference type="ChEBI" id="CHEBI:49883"/>
    </cofactor>
    <text evidence="1">Binds 1 [4Fe-4S] cluster per subunit. The cluster is chelated by three Cys residues, the fourth Fe has a free coordination site that may bind a sulfur atom transferred from the persulfide of IscS.</text>
</comment>
<comment type="pathway">
    <text evidence="1">tRNA modification.</text>
</comment>
<comment type="subunit">
    <text evidence="1">Homodimer.</text>
</comment>
<comment type="subcellular location">
    <subcellularLocation>
        <location evidence="1">Cytoplasm</location>
    </subcellularLocation>
</comment>
<comment type="miscellaneous">
    <text evidence="1">The thiolation reaction likely consists of two steps: a first activation step by ATP to form an adenylated intermediate of the target base of tRNA, and a second nucleophilic substitution step of the sulfur (S) atom supplied by the hydrosulfide attached to the Fe-S cluster.</text>
</comment>
<comment type="similarity">
    <text evidence="1">Belongs to the TtcA family.</text>
</comment>
<protein>
    <recommendedName>
        <fullName evidence="1">tRNA-cytidine(32) 2-sulfurtransferase</fullName>
        <ecNumber evidence="1">2.8.1.-</ecNumber>
    </recommendedName>
    <alternativeName>
        <fullName evidence="1">Two-thiocytidine biosynthesis protein A</fullName>
    </alternativeName>
    <alternativeName>
        <fullName evidence="1">tRNA 2-thiocytidine biosynthesis protein TtcA</fullName>
    </alternativeName>
</protein>
<keyword id="KW-0004">4Fe-4S</keyword>
<keyword id="KW-0067">ATP-binding</keyword>
<keyword id="KW-0963">Cytoplasm</keyword>
<keyword id="KW-0408">Iron</keyword>
<keyword id="KW-0411">Iron-sulfur</keyword>
<keyword id="KW-0460">Magnesium</keyword>
<keyword id="KW-0479">Metal-binding</keyword>
<keyword id="KW-0547">Nucleotide-binding</keyword>
<keyword id="KW-1185">Reference proteome</keyword>
<keyword id="KW-0694">RNA-binding</keyword>
<keyword id="KW-0808">Transferase</keyword>
<keyword id="KW-0819">tRNA processing</keyword>
<keyword id="KW-0820">tRNA-binding</keyword>
<proteinExistence type="inferred from homology"/>
<gene>
    <name evidence="1" type="primary">ttcA</name>
    <name type="ordered locus">plu2575</name>
</gene>
<accession>Q7N3Y7</accession>
<name>TTCA_PHOLL</name>
<evidence type="ECO:0000255" key="1">
    <source>
        <dbReference type="HAMAP-Rule" id="MF_01850"/>
    </source>
</evidence>
<reference key="1">
    <citation type="journal article" date="2003" name="Nat. Biotechnol.">
        <title>The genome sequence of the entomopathogenic bacterium Photorhabdus luminescens.</title>
        <authorList>
            <person name="Duchaud E."/>
            <person name="Rusniok C."/>
            <person name="Frangeul L."/>
            <person name="Buchrieser C."/>
            <person name="Givaudan A."/>
            <person name="Taourit S."/>
            <person name="Bocs S."/>
            <person name="Boursaux-Eude C."/>
            <person name="Chandler M."/>
            <person name="Charles J.-F."/>
            <person name="Dassa E."/>
            <person name="Derose R."/>
            <person name="Derzelle S."/>
            <person name="Freyssinet G."/>
            <person name="Gaudriault S."/>
            <person name="Medigue C."/>
            <person name="Lanois A."/>
            <person name="Powell K."/>
            <person name="Siguier P."/>
            <person name="Vincent R."/>
            <person name="Wingate V."/>
            <person name="Zouine M."/>
            <person name="Glaser P."/>
            <person name="Boemare N."/>
            <person name="Danchin A."/>
            <person name="Kunst F."/>
        </authorList>
    </citation>
    <scope>NUCLEOTIDE SEQUENCE [LARGE SCALE GENOMIC DNA]</scope>
    <source>
        <strain>DSM 15139 / CIP 105565 / TT01</strain>
    </source>
</reference>
<feature type="chain" id="PRO_0000348785" description="tRNA-cytidine(32) 2-sulfurtransferase">
    <location>
        <begin position="1"/>
        <end position="306"/>
    </location>
</feature>
<feature type="short sequence motif" description="PP-loop motif" evidence="1">
    <location>
        <begin position="44"/>
        <end position="49"/>
    </location>
</feature>
<feature type="binding site" evidence="1">
    <location>
        <position position="119"/>
    </location>
    <ligand>
        <name>[4Fe-4S] cluster</name>
        <dbReference type="ChEBI" id="CHEBI:49883"/>
    </ligand>
</feature>
<feature type="binding site" evidence="1">
    <location>
        <position position="122"/>
    </location>
    <ligand>
        <name>[4Fe-4S] cluster</name>
        <dbReference type="ChEBI" id="CHEBI:49883"/>
    </ligand>
</feature>
<feature type="binding site" evidence="1">
    <location>
        <position position="210"/>
    </location>
    <ligand>
        <name>[4Fe-4S] cluster</name>
        <dbReference type="ChEBI" id="CHEBI:49883"/>
    </ligand>
</feature>
<organism>
    <name type="scientific">Photorhabdus laumondii subsp. laumondii (strain DSM 15139 / CIP 105565 / TT01)</name>
    <name type="common">Photorhabdus luminescens subsp. laumondii</name>
    <dbReference type="NCBI Taxonomy" id="243265"/>
    <lineage>
        <taxon>Bacteria</taxon>
        <taxon>Pseudomonadati</taxon>
        <taxon>Pseudomonadota</taxon>
        <taxon>Gammaproteobacteria</taxon>
        <taxon>Enterobacterales</taxon>
        <taxon>Morganellaceae</taxon>
        <taxon>Photorhabdus</taxon>
    </lineage>
</organism>
<dbReference type="EC" id="2.8.1.-" evidence="1"/>
<dbReference type="EMBL" id="BX571867">
    <property type="protein sequence ID" value="CAE14949.1"/>
    <property type="molecule type" value="Genomic_DNA"/>
</dbReference>
<dbReference type="SMR" id="Q7N3Y7"/>
<dbReference type="STRING" id="243265.plu2575"/>
<dbReference type="KEGG" id="plu:plu2575"/>
<dbReference type="eggNOG" id="COG0037">
    <property type="taxonomic scope" value="Bacteria"/>
</dbReference>
<dbReference type="HOGENOM" id="CLU_026481_0_0_6"/>
<dbReference type="Proteomes" id="UP000002514">
    <property type="component" value="Chromosome"/>
</dbReference>
<dbReference type="GO" id="GO:0005737">
    <property type="term" value="C:cytoplasm"/>
    <property type="evidence" value="ECO:0007669"/>
    <property type="project" value="UniProtKB-SubCell"/>
</dbReference>
<dbReference type="GO" id="GO:0051539">
    <property type="term" value="F:4 iron, 4 sulfur cluster binding"/>
    <property type="evidence" value="ECO:0007669"/>
    <property type="project" value="UniProtKB-UniRule"/>
</dbReference>
<dbReference type="GO" id="GO:0005524">
    <property type="term" value="F:ATP binding"/>
    <property type="evidence" value="ECO:0007669"/>
    <property type="project" value="UniProtKB-UniRule"/>
</dbReference>
<dbReference type="GO" id="GO:0000287">
    <property type="term" value="F:magnesium ion binding"/>
    <property type="evidence" value="ECO:0007669"/>
    <property type="project" value="UniProtKB-UniRule"/>
</dbReference>
<dbReference type="GO" id="GO:0016783">
    <property type="term" value="F:sulfurtransferase activity"/>
    <property type="evidence" value="ECO:0007669"/>
    <property type="project" value="UniProtKB-UniRule"/>
</dbReference>
<dbReference type="GO" id="GO:0000049">
    <property type="term" value="F:tRNA binding"/>
    <property type="evidence" value="ECO:0007669"/>
    <property type="project" value="UniProtKB-KW"/>
</dbReference>
<dbReference type="GO" id="GO:0034227">
    <property type="term" value="P:tRNA thio-modification"/>
    <property type="evidence" value="ECO:0007669"/>
    <property type="project" value="UniProtKB-UniRule"/>
</dbReference>
<dbReference type="CDD" id="cd24138">
    <property type="entry name" value="TtcA-like"/>
    <property type="match status" value="1"/>
</dbReference>
<dbReference type="Gene3D" id="3.40.50.620">
    <property type="entry name" value="HUPs"/>
    <property type="match status" value="1"/>
</dbReference>
<dbReference type="HAMAP" id="MF_01850">
    <property type="entry name" value="TtcA"/>
    <property type="match status" value="1"/>
</dbReference>
<dbReference type="InterPro" id="IPR014729">
    <property type="entry name" value="Rossmann-like_a/b/a_fold"/>
</dbReference>
<dbReference type="InterPro" id="IPR011063">
    <property type="entry name" value="TilS/TtcA_N"/>
</dbReference>
<dbReference type="InterPro" id="IPR012089">
    <property type="entry name" value="tRNA_Cyd_32_2_STrfase"/>
</dbReference>
<dbReference type="InterPro" id="IPR035107">
    <property type="entry name" value="tRNA_thiolation_TtcA_Ctu1"/>
</dbReference>
<dbReference type="NCBIfam" id="NF007972">
    <property type="entry name" value="PRK10696.1"/>
    <property type="match status" value="1"/>
</dbReference>
<dbReference type="PANTHER" id="PTHR43686:SF1">
    <property type="entry name" value="AMINOTRAN_5 DOMAIN-CONTAINING PROTEIN"/>
    <property type="match status" value="1"/>
</dbReference>
<dbReference type="PANTHER" id="PTHR43686">
    <property type="entry name" value="SULFURTRANSFERASE-RELATED"/>
    <property type="match status" value="1"/>
</dbReference>
<dbReference type="Pfam" id="PF01171">
    <property type="entry name" value="ATP_bind_3"/>
    <property type="match status" value="1"/>
</dbReference>
<dbReference type="PIRSF" id="PIRSF004976">
    <property type="entry name" value="ATPase_YdaO"/>
    <property type="match status" value="1"/>
</dbReference>
<dbReference type="SUPFAM" id="SSF52402">
    <property type="entry name" value="Adenine nucleotide alpha hydrolases-like"/>
    <property type="match status" value="1"/>
</dbReference>